<proteinExistence type="inferred from homology"/>
<comment type="function">
    <text evidence="1">Regulates the transcription of the pyrimidine nucleotide (pyr) operon in response to exogenous pyrimidines.</text>
</comment>
<comment type="function">
    <text evidence="1">Also displays a weak uracil phosphoribosyltransferase activity which is not physiologically significant.</text>
</comment>
<comment type="catalytic activity">
    <reaction evidence="1">
        <text>UMP + diphosphate = 5-phospho-alpha-D-ribose 1-diphosphate + uracil</text>
        <dbReference type="Rhea" id="RHEA:13017"/>
        <dbReference type="ChEBI" id="CHEBI:17568"/>
        <dbReference type="ChEBI" id="CHEBI:33019"/>
        <dbReference type="ChEBI" id="CHEBI:57865"/>
        <dbReference type="ChEBI" id="CHEBI:58017"/>
        <dbReference type="EC" id="2.4.2.9"/>
    </reaction>
</comment>
<comment type="similarity">
    <text evidence="1">Belongs to the purine/pyrimidine phosphoribosyltransferase family. PyrR subfamily.</text>
</comment>
<organism>
    <name type="scientific">Pseudomonas syringae pv. syringae (strain B728a)</name>
    <dbReference type="NCBI Taxonomy" id="205918"/>
    <lineage>
        <taxon>Bacteria</taxon>
        <taxon>Pseudomonadati</taxon>
        <taxon>Pseudomonadota</taxon>
        <taxon>Gammaproteobacteria</taxon>
        <taxon>Pseudomonadales</taxon>
        <taxon>Pseudomonadaceae</taxon>
        <taxon>Pseudomonas</taxon>
        <taxon>Pseudomonas syringae</taxon>
    </lineage>
</organism>
<name>PYRR_PSEU2</name>
<gene>
    <name evidence="1" type="primary">pyrR</name>
    <name type="ordered locus">Psyr_0483</name>
</gene>
<dbReference type="EC" id="2.4.2.9" evidence="1"/>
<dbReference type="EMBL" id="CP000075">
    <property type="protein sequence ID" value="AAY35553.1"/>
    <property type="molecule type" value="Genomic_DNA"/>
</dbReference>
<dbReference type="RefSeq" id="WP_011266430.1">
    <property type="nucleotide sequence ID" value="NC_007005.1"/>
</dbReference>
<dbReference type="RefSeq" id="YP_233591.1">
    <property type="nucleotide sequence ID" value="NC_007005.1"/>
</dbReference>
<dbReference type="SMR" id="Q4ZZ69"/>
<dbReference type="STRING" id="205918.Psyr_0483"/>
<dbReference type="KEGG" id="psb:Psyr_0483"/>
<dbReference type="PATRIC" id="fig|205918.7.peg.502"/>
<dbReference type="eggNOG" id="COG2065">
    <property type="taxonomic scope" value="Bacteria"/>
</dbReference>
<dbReference type="HOGENOM" id="CLU_094234_1_1_6"/>
<dbReference type="OrthoDB" id="9802227at2"/>
<dbReference type="Proteomes" id="UP000000426">
    <property type="component" value="Chromosome"/>
</dbReference>
<dbReference type="GO" id="GO:0004845">
    <property type="term" value="F:uracil phosphoribosyltransferase activity"/>
    <property type="evidence" value="ECO:0007669"/>
    <property type="project" value="UniProtKB-UniRule"/>
</dbReference>
<dbReference type="GO" id="GO:0006355">
    <property type="term" value="P:regulation of DNA-templated transcription"/>
    <property type="evidence" value="ECO:0007669"/>
    <property type="project" value="UniProtKB-UniRule"/>
</dbReference>
<dbReference type="CDD" id="cd06223">
    <property type="entry name" value="PRTases_typeI"/>
    <property type="match status" value="1"/>
</dbReference>
<dbReference type="Gene3D" id="3.40.50.2020">
    <property type="match status" value="1"/>
</dbReference>
<dbReference type="HAMAP" id="MF_01219">
    <property type="entry name" value="PyrR"/>
    <property type="match status" value="1"/>
</dbReference>
<dbReference type="InterPro" id="IPR000836">
    <property type="entry name" value="PRibTrfase_dom"/>
</dbReference>
<dbReference type="InterPro" id="IPR029057">
    <property type="entry name" value="PRTase-like"/>
</dbReference>
<dbReference type="InterPro" id="IPR023050">
    <property type="entry name" value="PyrR"/>
</dbReference>
<dbReference type="InterPro" id="IPR050137">
    <property type="entry name" value="PyrR_bifunctional"/>
</dbReference>
<dbReference type="NCBIfam" id="NF003545">
    <property type="entry name" value="PRK05205.1-1"/>
    <property type="match status" value="1"/>
</dbReference>
<dbReference type="PANTHER" id="PTHR11608">
    <property type="entry name" value="BIFUNCTIONAL PROTEIN PYRR"/>
    <property type="match status" value="1"/>
</dbReference>
<dbReference type="PANTHER" id="PTHR11608:SF0">
    <property type="entry name" value="BIFUNCTIONAL PROTEIN PYRR"/>
    <property type="match status" value="1"/>
</dbReference>
<dbReference type="Pfam" id="PF00156">
    <property type="entry name" value="Pribosyltran"/>
    <property type="match status" value="1"/>
</dbReference>
<dbReference type="SUPFAM" id="SSF53271">
    <property type="entry name" value="PRTase-like"/>
    <property type="match status" value="1"/>
</dbReference>
<protein>
    <recommendedName>
        <fullName evidence="1">Bifunctional protein PyrR</fullName>
    </recommendedName>
    <domain>
        <recommendedName>
            <fullName evidence="1">Pyrimidine operon regulatory protein</fullName>
        </recommendedName>
    </domain>
    <domain>
        <recommendedName>
            <fullName evidence="1">Uracil phosphoribosyltransferase</fullName>
            <shortName evidence="1">UPRTase</shortName>
            <ecNumber evidence="1">2.4.2.9</ecNumber>
        </recommendedName>
    </domain>
</protein>
<keyword id="KW-0328">Glycosyltransferase</keyword>
<keyword id="KW-0804">Transcription</keyword>
<keyword id="KW-0805">Transcription regulation</keyword>
<keyword id="KW-0808">Transferase</keyword>
<reference key="1">
    <citation type="journal article" date="2005" name="Proc. Natl. Acad. Sci. U.S.A.">
        <title>Comparison of the complete genome sequences of Pseudomonas syringae pv. syringae B728a and pv. tomato DC3000.</title>
        <authorList>
            <person name="Feil H."/>
            <person name="Feil W.S."/>
            <person name="Chain P."/>
            <person name="Larimer F."/>
            <person name="Dibartolo G."/>
            <person name="Copeland A."/>
            <person name="Lykidis A."/>
            <person name="Trong S."/>
            <person name="Nolan M."/>
            <person name="Goltsman E."/>
            <person name="Thiel J."/>
            <person name="Malfatti S."/>
            <person name="Loper J.E."/>
            <person name="Lapidus A."/>
            <person name="Detter J.C."/>
            <person name="Land M."/>
            <person name="Richardson P.M."/>
            <person name="Kyrpides N.C."/>
            <person name="Ivanova N."/>
            <person name="Lindow S.E."/>
        </authorList>
    </citation>
    <scope>NUCLEOTIDE SEQUENCE [LARGE SCALE GENOMIC DNA]</scope>
    <source>
        <strain>B728a</strain>
    </source>
</reference>
<feature type="chain" id="PRO_1000053859" description="Bifunctional protein PyrR">
    <location>
        <begin position="1"/>
        <end position="170"/>
    </location>
</feature>
<feature type="short sequence motif" description="PRPP-binding" evidence="1">
    <location>
        <begin position="90"/>
        <end position="102"/>
    </location>
</feature>
<sequence length="170" mass="18428">MSLPDPAELIRQMATDLNAHLSKRGISDPRFIGIRTGGVWVAQALLKALNNPAPLGTLDVSFYRDDFSQNGLHPQVRPSELPFEIEGQHLVLIDDVLMSGRTVRAALNELFDYGRPASVTLVCLLDLDAGELPVRPNVVGATLSLAPDERIKLSGPEPLALELQDLSTAL</sequence>
<accession>Q4ZZ69</accession>
<evidence type="ECO:0000255" key="1">
    <source>
        <dbReference type="HAMAP-Rule" id="MF_01219"/>
    </source>
</evidence>